<evidence type="ECO:0000255" key="1">
    <source>
        <dbReference type="HAMAP-Rule" id="MF_01713"/>
    </source>
</evidence>
<evidence type="ECO:0000269" key="2">
    <source>
    </source>
</evidence>
<evidence type="ECO:0000305" key="3"/>
<feature type="chain" id="PRO_0000092725" description="Phosphonates import ATP-binding protein PhnC">
    <location>
        <begin position="1"/>
        <end position="279"/>
    </location>
</feature>
<feature type="domain" description="ABC transporter" evidence="1">
    <location>
        <begin position="2"/>
        <end position="245"/>
    </location>
</feature>
<feature type="binding site" evidence="1">
    <location>
        <begin position="34"/>
        <end position="41"/>
    </location>
    <ligand>
        <name>ATP</name>
        <dbReference type="ChEBI" id="CHEBI:30616"/>
    </ligand>
</feature>
<feature type="sequence conflict" description="In Ref. 1; AAC44218." evidence="3" ref="1">
    <original>H</original>
    <variation>P</variation>
    <location>
        <position position="220"/>
    </location>
</feature>
<feature type="sequence conflict" description="In Ref. 1; AAC44218." evidence="3" ref="1">
    <original>ETASAGLKPLALAGP</original>
    <variation>KQHRPA</variation>
    <location>
        <begin position="265"/>
        <end position="279"/>
    </location>
</feature>
<protein>
    <recommendedName>
        <fullName evidence="1">Phosphonates import ATP-binding protein PhnC</fullName>
        <ecNumber evidence="1">7.3.2.2</ecNumber>
    </recommendedName>
</protein>
<keyword id="KW-0067">ATP-binding</keyword>
<keyword id="KW-0997">Cell inner membrane</keyword>
<keyword id="KW-1003">Cell membrane</keyword>
<keyword id="KW-0472">Membrane</keyword>
<keyword id="KW-0547">Nucleotide-binding</keyword>
<keyword id="KW-0918">Phosphonate transport</keyword>
<keyword id="KW-0614">Plasmid</keyword>
<keyword id="KW-1185">Reference proteome</keyword>
<keyword id="KW-1278">Translocase</keyword>
<keyword id="KW-0813">Transport</keyword>
<organism>
    <name type="scientific">Rhizobium meliloti (strain 1021)</name>
    <name type="common">Ensifer meliloti</name>
    <name type="synonym">Sinorhizobium meliloti</name>
    <dbReference type="NCBI Taxonomy" id="266834"/>
    <lineage>
        <taxon>Bacteria</taxon>
        <taxon>Pseudomonadati</taxon>
        <taxon>Pseudomonadota</taxon>
        <taxon>Alphaproteobacteria</taxon>
        <taxon>Hyphomicrobiales</taxon>
        <taxon>Rhizobiaceae</taxon>
        <taxon>Sinorhizobium/Ensifer group</taxon>
        <taxon>Sinorhizobium</taxon>
    </lineage>
</organism>
<dbReference type="EC" id="7.3.2.2" evidence="1"/>
<dbReference type="EMBL" id="U59229">
    <property type="protein sequence ID" value="AAC44218.1"/>
    <property type="molecule type" value="Genomic_DNA"/>
</dbReference>
<dbReference type="EMBL" id="AL591985">
    <property type="protein sequence ID" value="CAC49243.1"/>
    <property type="molecule type" value="Genomic_DNA"/>
</dbReference>
<dbReference type="PIR" id="C95947">
    <property type="entry name" value="C95947"/>
</dbReference>
<dbReference type="RefSeq" id="NP_437383.1">
    <property type="nucleotide sequence ID" value="NC_003078.1"/>
</dbReference>
<dbReference type="RefSeq" id="WP_010975699.1">
    <property type="nucleotide sequence ID" value="NC_003078.1"/>
</dbReference>
<dbReference type="SMR" id="Q92V71"/>
<dbReference type="EnsemblBacteria" id="CAC49243">
    <property type="protein sequence ID" value="CAC49243"/>
    <property type="gene ID" value="SM_b21177"/>
</dbReference>
<dbReference type="KEGG" id="sme:SM_b21177"/>
<dbReference type="PATRIC" id="fig|266834.11.peg.5774"/>
<dbReference type="eggNOG" id="COG3638">
    <property type="taxonomic scope" value="Bacteria"/>
</dbReference>
<dbReference type="HOGENOM" id="CLU_000604_1_22_5"/>
<dbReference type="OrthoDB" id="9802264at2"/>
<dbReference type="Proteomes" id="UP000001976">
    <property type="component" value="Plasmid pSymB"/>
</dbReference>
<dbReference type="GO" id="GO:0005886">
    <property type="term" value="C:plasma membrane"/>
    <property type="evidence" value="ECO:0007669"/>
    <property type="project" value="UniProtKB-SubCell"/>
</dbReference>
<dbReference type="GO" id="GO:0015416">
    <property type="term" value="F:ABC-type phosphonate transporter activity"/>
    <property type="evidence" value="ECO:0007669"/>
    <property type="project" value="UniProtKB-EC"/>
</dbReference>
<dbReference type="GO" id="GO:0005524">
    <property type="term" value="F:ATP binding"/>
    <property type="evidence" value="ECO:0007669"/>
    <property type="project" value="UniProtKB-KW"/>
</dbReference>
<dbReference type="GO" id="GO:0016887">
    <property type="term" value="F:ATP hydrolysis activity"/>
    <property type="evidence" value="ECO:0007669"/>
    <property type="project" value="InterPro"/>
</dbReference>
<dbReference type="CDD" id="cd03256">
    <property type="entry name" value="ABC_PhnC_transporter"/>
    <property type="match status" value="1"/>
</dbReference>
<dbReference type="Gene3D" id="3.40.50.300">
    <property type="entry name" value="P-loop containing nucleotide triphosphate hydrolases"/>
    <property type="match status" value="1"/>
</dbReference>
<dbReference type="InterPro" id="IPR003593">
    <property type="entry name" value="AAA+_ATPase"/>
</dbReference>
<dbReference type="InterPro" id="IPR003439">
    <property type="entry name" value="ABC_transporter-like_ATP-bd"/>
</dbReference>
<dbReference type="InterPro" id="IPR017871">
    <property type="entry name" value="ABC_transporter-like_CS"/>
</dbReference>
<dbReference type="InterPro" id="IPR012693">
    <property type="entry name" value="ABC_transpr_PhnC"/>
</dbReference>
<dbReference type="InterPro" id="IPR050086">
    <property type="entry name" value="MetN_ABC_transporter-like"/>
</dbReference>
<dbReference type="InterPro" id="IPR027417">
    <property type="entry name" value="P-loop_NTPase"/>
</dbReference>
<dbReference type="NCBIfam" id="TIGR02315">
    <property type="entry name" value="ABC_phnC"/>
    <property type="match status" value="1"/>
</dbReference>
<dbReference type="PANTHER" id="PTHR43166">
    <property type="entry name" value="AMINO ACID IMPORT ATP-BINDING PROTEIN"/>
    <property type="match status" value="1"/>
</dbReference>
<dbReference type="PANTHER" id="PTHR43166:SF6">
    <property type="entry name" value="PHOSPHONATES IMPORT ATP-BINDING PROTEIN PHNC"/>
    <property type="match status" value="1"/>
</dbReference>
<dbReference type="Pfam" id="PF00005">
    <property type="entry name" value="ABC_tran"/>
    <property type="match status" value="1"/>
</dbReference>
<dbReference type="SMART" id="SM00382">
    <property type="entry name" value="AAA"/>
    <property type="match status" value="1"/>
</dbReference>
<dbReference type="SUPFAM" id="SSF52540">
    <property type="entry name" value="P-loop containing nucleoside triphosphate hydrolases"/>
    <property type="match status" value="1"/>
</dbReference>
<dbReference type="PROSITE" id="PS00211">
    <property type="entry name" value="ABC_TRANSPORTER_1"/>
    <property type="match status" value="1"/>
</dbReference>
<dbReference type="PROSITE" id="PS50893">
    <property type="entry name" value="ABC_TRANSPORTER_2"/>
    <property type="match status" value="1"/>
</dbReference>
<dbReference type="PROSITE" id="PS51249">
    <property type="entry name" value="PHNC"/>
    <property type="match status" value="1"/>
</dbReference>
<sequence>MFQLKNVTRQFGKKTAVSTVTFDIPQGQMVGIIGRSGAGKSTLLRMINRLVDPSSGSIEFAGLQVSSLKGAALRNWQRDCAMIFQQFNLVPRLDVLTNVLLGRLNHRSTVLSVLNMFSREERIMAIGALERLGIEQTALQPAGTLSGGQQQRVAIARALMQQPKVLLADEPIASLDPLNAKIVMDALRDINERDGITVITNLHTLDTARNYCERVIGMAHGRVVFDGQPKDLTAAAVAAIYGAETAIEESMTSTSINIPAEAPRETASAGLKPLALAGP</sequence>
<gene>
    <name evidence="1" type="primary">phnC</name>
    <name type="synonym">phoC</name>
    <name type="ordered locus">RB0843</name>
    <name type="ORF">SMb21177</name>
</gene>
<accession>Q92V71</accession>
<accession>Q52906</accession>
<comment type="function">
    <text evidence="1 2">Part of the ABC transporter complex PhnCDE involved in phosphonates import. Responsible for energy coupling to the transport system.</text>
</comment>
<comment type="catalytic activity">
    <reaction evidence="1">
        <text>phosphonate(out) + ATP + H2O = phosphonate(in) + ADP + phosphate + H(+)</text>
        <dbReference type="Rhea" id="RHEA:18065"/>
        <dbReference type="ChEBI" id="CHEBI:15377"/>
        <dbReference type="ChEBI" id="CHEBI:15378"/>
        <dbReference type="ChEBI" id="CHEBI:16215"/>
        <dbReference type="ChEBI" id="CHEBI:30616"/>
        <dbReference type="ChEBI" id="CHEBI:43474"/>
        <dbReference type="ChEBI" id="CHEBI:456216"/>
        <dbReference type="EC" id="7.3.2.2"/>
    </reaction>
</comment>
<comment type="subunit">
    <text evidence="1">The complex is composed of two ATP-binding proteins (PhnC), two transmembrane proteins (PhnE) and a solute-binding protein (PhnD).</text>
</comment>
<comment type="subcellular location">
    <subcellularLocation>
        <location evidence="1">Cell inner membrane</location>
        <topology evidence="1">Peripheral membrane protein</topology>
    </subcellularLocation>
</comment>
<comment type="similarity">
    <text evidence="1">Belongs to the ABC transporter superfamily. Phosphonates importer (TC 3.A.1.9.1) family.</text>
</comment>
<reference key="1">
    <citation type="journal article" date="1996" name="J. Bacteriol.">
        <title>A phosphate transport system is required for symbiotic nitrogen fixation by Rhizobium meliloti.</title>
        <authorList>
            <person name="Bardin S."/>
            <person name="Dan S."/>
            <person name="Osteras M.T."/>
            <person name="Finan T.M."/>
        </authorList>
    </citation>
    <scope>NUCLEOTIDE SEQUENCE [GENOMIC DNA]</scope>
    <scope>FUNCTION</scope>
    <source>
        <strain>RCR2011 / SU47</strain>
        <plasmid>pRmeSU47b</plasmid>
    </source>
</reference>
<reference key="2">
    <citation type="journal article" date="2001" name="Proc. Natl. Acad. Sci. U.S.A.">
        <title>The complete sequence of the 1,683-kb pSymB megaplasmid from the N2-fixing endosymbiont Sinorhizobium meliloti.</title>
        <authorList>
            <person name="Finan T.M."/>
            <person name="Weidner S."/>
            <person name="Wong K."/>
            <person name="Buhrmester J."/>
            <person name="Chain P."/>
            <person name="Vorhoelter F.J."/>
            <person name="Hernandez-Lucas I."/>
            <person name="Becker A."/>
            <person name="Cowie A."/>
            <person name="Gouzy J."/>
            <person name="Golding B."/>
            <person name="Puehler A."/>
        </authorList>
    </citation>
    <scope>NUCLEOTIDE SEQUENCE [LARGE SCALE GENOMIC DNA]</scope>
    <source>
        <strain>1021</strain>
        <plasmid>pSymB (megaplasmid 2)</plasmid>
    </source>
</reference>
<reference key="3">
    <citation type="journal article" date="2001" name="Science">
        <title>The composite genome of the legume symbiont Sinorhizobium meliloti.</title>
        <authorList>
            <person name="Galibert F."/>
            <person name="Finan T.M."/>
            <person name="Long S.R."/>
            <person name="Puehler A."/>
            <person name="Abola P."/>
            <person name="Ampe F."/>
            <person name="Barloy-Hubler F."/>
            <person name="Barnett M.J."/>
            <person name="Becker A."/>
            <person name="Boistard P."/>
            <person name="Bothe G."/>
            <person name="Boutry M."/>
            <person name="Bowser L."/>
            <person name="Buhrmester J."/>
            <person name="Cadieu E."/>
            <person name="Capela D."/>
            <person name="Chain P."/>
            <person name="Cowie A."/>
            <person name="Davis R.W."/>
            <person name="Dreano S."/>
            <person name="Federspiel N.A."/>
            <person name="Fisher R.F."/>
            <person name="Gloux S."/>
            <person name="Godrie T."/>
            <person name="Goffeau A."/>
            <person name="Golding B."/>
            <person name="Gouzy J."/>
            <person name="Gurjal M."/>
            <person name="Hernandez-Lucas I."/>
            <person name="Hong A."/>
            <person name="Huizar L."/>
            <person name="Hyman R.W."/>
            <person name="Jones T."/>
            <person name="Kahn D."/>
            <person name="Kahn M.L."/>
            <person name="Kalman S."/>
            <person name="Keating D.H."/>
            <person name="Kiss E."/>
            <person name="Komp C."/>
            <person name="Lelaure V."/>
            <person name="Masuy D."/>
            <person name="Palm C."/>
            <person name="Peck M.C."/>
            <person name="Pohl T.M."/>
            <person name="Portetelle D."/>
            <person name="Purnelle B."/>
            <person name="Ramsperger U."/>
            <person name="Surzycki R."/>
            <person name="Thebault P."/>
            <person name="Vandenbol M."/>
            <person name="Vorhoelter F.J."/>
            <person name="Weidner S."/>
            <person name="Wells D.H."/>
            <person name="Wong K."/>
            <person name="Yeh K.-C."/>
            <person name="Batut J."/>
        </authorList>
    </citation>
    <scope>NUCLEOTIDE SEQUENCE [LARGE SCALE GENOMIC DNA]</scope>
    <source>
        <strain>1021</strain>
    </source>
</reference>
<name>PHNC_RHIME</name>
<geneLocation type="plasmid">
    <name>pSymB</name>
    <name>megaplasmid 2</name>
</geneLocation>
<geneLocation type="plasmid">
    <name>pRmeSU47b</name>
</geneLocation>
<proteinExistence type="inferred from homology"/>